<accession>Q3SVK5</accession>
<dbReference type="EC" id="1.1.1.37" evidence="1"/>
<dbReference type="EMBL" id="CP000115">
    <property type="protein sequence ID" value="ABA03686.1"/>
    <property type="molecule type" value="Genomic_DNA"/>
</dbReference>
<dbReference type="RefSeq" id="WP_011313750.1">
    <property type="nucleotide sequence ID" value="NC_007406.1"/>
</dbReference>
<dbReference type="SMR" id="Q3SVK5"/>
<dbReference type="STRING" id="323098.Nwi_0419"/>
<dbReference type="KEGG" id="nwi:Nwi_0419"/>
<dbReference type="eggNOG" id="COG0039">
    <property type="taxonomic scope" value="Bacteria"/>
</dbReference>
<dbReference type="HOGENOM" id="CLU_045401_2_1_5"/>
<dbReference type="OrthoDB" id="9802969at2"/>
<dbReference type="Proteomes" id="UP000002531">
    <property type="component" value="Chromosome"/>
</dbReference>
<dbReference type="GO" id="GO:0004459">
    <property type="term" value="F:L-lactate dehydrogenase activity"/>
    <property type="evidence" value="ECO:0007669"/>
    <property type="project" value="TreeGrafter"/>
</dbReference>
<dbReference type="GO" id="GO:0030060">
    <property type="term" value="F:L-malate dehydrogenase (NAD+) activity"/>
    <property type="evidence" value="ECO:0007669"/>
    <property type="project" value="UniProtKB-UniRule"/>
</dbReference>
<dbReference type="GO" id="GO:0006089">
    <property type="term" value="P:lactate metabolic process"/>
    <property type="evidence" value="ECO:0007669"/>
    <property type="project" value="TreeGrafter"/>
</dbReference>
<dbReference type="GO" id="GO:0006099">
    <property type="term" value="P:tricarboxylic acid cycle"/>
    <property type="evidence" value="ECO:0007669"/>
    <property type="project" value="UniProtKB-UniRule"/>
</dbReference>
<dbReference type="CDD" id="cd01339">
    <property type="entry name" value="LDH-like_MDH"/>
    <property type="match status" value="1"/>
</dbReference>
<dbReference type="FunFam" id="3.40.50.720:FF:000018">
    <property type="entry name" value="Malate dehydrogenase"/>
    <property type="match status" value="1"/>
</dbReference>
<dbReference type="FunFam" id="3.90.110.10:FF:000004">
    <property type="entry name" value="Malate dehydrogenase"/>
    <property type="match status" value="1"/>
</dbReference>
<dbReference type="Gene3D" id="3.90.110.10">
    <property type="entry name" value="Lactate dehydrogenase/glycoside hydrolase, family 4, C-terminal"/>
    <property type="match status" value="1"/>
</dbReference>
<dbReference type="Gene3D" id="3.40.50.720">
    <property type="entry name" value="NAD(P)-binding Rossmann-like Domain"/>
    <property type="match status" value="1"/>
</dbReference>
<dbReference type="HAMAP" id="MF_00487">
    <property type="entry name" value="Malate_dehydrog_3"/>
    <property type="match status" value="1"/>
</dbReference>
<dbReference type="InterPro" id="IPR001557">
    <property type="entry name" value="L-lactate/malate_DH"/>
</dbReference>
<dbReference type="InterPro" id="IPR022383">
    <property type="entry name" value="Lactate/malate_DH_C"/>
</dbReference>
<dbReference type="InterPro" id="IPR001236">
    <property type="entry name" value="Lactate/malate_DH_N"/>
</dbReference>
<dbReference type="InterPro" id="IPR015955">
    <property type="entry name" value="Lactate_DH/Glyco_Ohase_4_C"/>
</dbReference>
<dbReference type="InterPro" id="IPR011275">
    <property type="entry name" value="Malate_DH_type3"/>
</dbReference>
<dbReference type="InterPro" id="IPR036291">
    <property type="entry name" value="NAD(P)-bd_dom_sf"/>
</dbReference>
<dbReference type="NCBIfam" id="TIGR01763">
    <property type="entry name" value="MalateDH_bact"/>
    <property type="match status" value="1"/>
</dbReference>
<dbReference type="NCBIfam" id="NF004863">
    <property type="entry name" value="PRK06223.1"/>
    <property type="match status" value="1"/>
</dbReference>
<dbReference type="PANTHER" id="PTHR43128">
    <property type="entry name" value="L-2-HYDROXYCARBOXYLATE DEHYDROGENASE (NAD(P)(+))"/>
    <property type="match status" value="1"/>
</dbReference>
<dbReference type="PANTHER" id="PTHR43128:SF16">
    <property type="entry name" value="L-LACTATE DEHYDROGENASE"/>
    <property type="match status" value="1"/>
</dbReference>
<dbReference type="Pfam" id="PF02866">
    <property type="entry name" value="Ldh_1_C"/>
    <property type="match status" value="1"/>
</dbReference>
<dbReference type="Pfam" id="PF00056">
    <property type="entry name" value="Ldh_1_N"/>
    <property type="match status" value="1"/>
</dbReference>
<dbReference type="PIRSF" id="PIRSF000102">
    <property type="entry name" value="Lac_mal_DH"/>
    <property type="match status" value="1"/>
</dbReference>
<dbReference type="PRINTS" id="PR00086">
    <property type="entry name" value="LLDHDRGNASE"/>
</dbReference>
<dbReference type="SUPFAM" id="SSF56327">
    <property type="entry name" value="LDH C-terminal domain-like"/>
    <property type="match status" value="1"/>
</dbReference>
<dbReference type="SUPFAM" id="SSF51735">
    <property type="entry name" value="NAD(P)-binding Rossmann-fold domains"/>
    <property type="match status" value="1"/>
</dbReference>
<organism>
    <name type="scientific">Nitrobacter winogradskyi (strain ATCC 25391 / DSM 10237 / CIP 104748 / NCIMB 11846 / Nb-255)</name>
    <dbReference type="NCBI Taxonomy" id="323098"/>
    <lineage>
        <taxon>Bacteria</taxon>
        <taxon>Pseudomonadati</taxon>
        <taxon>Pseudomonadota</taxon>
        <taxon>Alphaproteobacteria</taxon>
        <taxon>Hyphomicrobiales</taxon>
        <taxon>Nitrobacteraceae</taxon>
        <taxon>Nitrobacter</taxon>
    </lineage>
</organism>
<gene>
    <name evidence="1" type="primary">mdh</name>
    <name type="ordered locus">Nwi_0419</name>
</gene>
<proteinExistence type="inferred from homology"/>
<keyword id="KW-0520">NAD</keyword>
<keyword id="KW-0560">Oxidoreductase</keyword>
<keyword id="KW-1185">Reference proteome</keyword>
<keyword id="KW-0816">Tricarboxylic acid cycle</keyword>
<sequence length="322" mass="34061">MARDKIGLIGSGQIGGTLAHLIGLKELGDVVMFDIADGVPQGKSLDIAQSSPVEGFDARLAGTNSYEALEGAGVCIVTAGVPRKPGMSRDDLLGINLKVMEQVGAGIRKYAPDAFVICITNPLDAMVWALQKASGLPAKKVVGMAGVLDSSRFRYFLADEFNVSVEDVTAFVLGGHGDSMVPLVKYSTVAGIPLPDLVKMGWTSQARIDEIVDRTRNGGAEIVNLLKTGSAFYAPAASAIAMAESFLRDKKRVLPCAAYLNGEFGVYDMYVGVPVVIGAKGVERIVEIELAGRDREAFDRSVAAVQGLVDACKKIAPDLLDR</sequence>
<name>MDH_NITWN</name>
<protein>
    <recommendedName>
        <fullName evidence="1">Malate dehydrogenase</fullName>
        <ecNumber evidence="1">1.1.1.37</ecNumber>
    </recommendedName>
</protein>
<evidence type="ECO:0000255" key="1">
    <source>
        <dbReference type="HAMAP-Rule" id="MF_00487"/>
    </source>
</evidence>
<comment type="function">
    <text evidence="1">Catalyzes the reversible oxidation of malate to oxaloacetate.</text>
</comment>
<comment type="catalytic activity">
    <reaction evidence="1">
        <text>(S)-malate + NAD(+) = oxaloacetate + NADH + H(+)</text>
        <dbReference type="Rhea" id="RHEA:21432"/>
        <dbReference type="ChEBI" id="CHEBI:15378"/>
        <dbReference type="ChEBI" id="CHEBI:15589"/>
        <dbReference type="ChEBI" id="CHEBI:16452"/>
        <dbReference type="ChEBI" id="CHEBI:57540"/>
        <dbReference type="ChEBI" id="CHEBI:57945"/>
        <dbReference type="EC" id="1.1.1.37"/>
    </reaction>
</comment>
<comment type="similarity">
    <text evidence="1">Belongs to the LDH/MDH superfamily. MDH type 3 family.</text>
</comment>
<feature type="chain" id="PRO_0000241954" description="Malate dehydrogenase">
    <location>
        <begin position="1"/>
        <end position="322"/>
    </location>
</feature>
<feature type="active site" description="Proton acceptor" evidence="1">
    <location>
        <position position="176"/>
    </location>
</feature>
<feature type="binding site" evidence="1">
    <location>
        <begin position="10"/>
        <end position="15"/>
    </location>
    <ligand>
        <name>NAD(+)</name>
        <dbReference type="ChEBI" id="CHEBI:57540"/>
    </ligand>
</feature>
<feature type="binding site" evidence="1">
    <location>
        <position position="34"/>
    </location>
    <ligand>
        <name>NAD(+)</name>
        <dbReference type="ChEBI" id="CHEBI:57540"/>
    </ligand>
</feature>
<feature type="binding site" evidence="1">
    <location>
        <position position="83"/>
    </location>
    <ligand>
        <name>substrate</name>
    </ligand>
</feature>
<feature type="binding site" evidence="1">
    <location>
        <position position="89"/>
    </location>
    <ligand>
        <name>substrate</name>
    </ligand>
</feature>
<feature type="binding site" evidence="1">
    <location>
        <position position="96"/>
    </location>
    <ligand>
        <name>NAD(+)</name>
        <dbReference type="ChEBI" id="CHEBI:57540"/>
    </ligand>
</feature>
<feature type="binding site" evidence="1">
    <location>
        <begin position="119"/>
        <end position="121"/>
    </location>
    <ligand>
        <name>NAD(+)</name>
        <dbReference type="ChEBI" id="CHEBI:57540"/>
    </ligand>
</feature>
<feature type="binding site" evidence="1">
    <location>
        <position position="121"/>
    </location>
    <ligand>
        <name>substrate</name>
    </ligand>
</feature>
<feature type="binding site" evidence="1">
    <location>
        <position position="152"/>
    </location>
    <ligand>
        <name>substrate</name>
    </ligand>
</feature>
<reference key="1">
    <citation type="journal article" date="2006" name="Appl. Environ. Microbiol.">
        <title>Genome sequence of the chemolithoautotrophic nitrite-oxidizing bacterium Nitrobacter winogradskyi Nb-255.</title>
        <authorList>
            <person name="Starkenburg S.R."/>
            <person name="Chain P.S.G."/>
            <person name="Sayavedra-Soto L.A."/>
            <person name="Hauser L."/>
            <person name="Land M.L."/>
            <person name="Larimer F.W."/>
            <person name="Malfatti S.A."/>
            <person name="Klotz M.G."/>
            <person name="Bottomley P.J."/>
            <person name="Arp D.J."/>
            <person name="Hickey W.J."/>
        </authorList>
    </citation>
    <scope>NUCLEOTIDE SEQUENCE [LARGE SCALE GENOMIC DNA]</scope>
    <source>
        <strain>ATCC 25391 / DSM 10237 / CIP 104748 / NCIMB 11846 / Nb-255</strain>
    </source>
</reference>